<accession>Q8FL06</accession>
<organism>
    <name type="scientific">Escherichia coli O6:H1 (strain CFT073 / ATCC 700928 / UPEC)</name>
    <dbReference type="NCBI Taxonomy" id="199310"/>
    <lineage>
        <taxon>Bacteria</taxon>
        <taxon>Pseudomonadati</taxon>
        <taxon>Pseudomonadota</taxon>
        <taxon>Gammaproteobacteria</taxon>
        <taxon>Enterobacterales</taxon>
        <taxon>Enterobacteriaceae</taxon>
        <taxon>Escherichia</taxon>
    </lineage>
</organism>
<evidence type="ECO:0000255" key="1">
    <source>
        <dbReference type="HAMAP-Rule" id="MF_00052"/>
    </source>
</evidence>
<evidence type="ECO:0000255" key="2">
    <source>
        <dbReference type="PROSITE-ProRule" id="PRU01319"/>
    </source>
</evidence>
<sequence>MIEFVYPHTQLVAGVDEVGRGPLVGAVVTAAVILDPARPIAGLNDSKKLSEKRRLALCEEIKEKALSWSLGRAEPHEIDELNILHATMLAMQRAVAGLHIAPEYVLIDGNRCPKLPMPSMAVVKGDSRVPEISAASILAKVTRDAEMAALDIVFPQYGFAQHKGYPTAFHLEKLAEYGATEHHRRSFGPVKRALGLAS</sequence>
<reference key="1">
    <citation type="journal article" date="2002" name="Proc. Natl. Acad. Sci. U.S.A.">
        <title>Extensive mosaic structure revealed by the complete genome sequence of uropathogenic Escherichia coli.</title>
        <authorList>
            <person name="Welch R.A."/>
            <person name="Burland V."/>
            <person name="Plunkett G. III"/>
            <person name="Redford P."/>
            <person name="Roesch P."/>
            <person name="Rasko D."/>
            <person name="Buckles E.L."/>
            <person name="Liou S.-R."/>
            <person name="Boutin A."/>
            <person name="Hackett J."/>
            <person name="Stroud D."/>
            <person name="Mayhew G.F."/>
            <person name="Rose D.J."/>
            <person name="Zhou S."/>
            <person name="Schwartz D.C."/>
            <person name="Perna N.T."/>
            <person name="Mobley H.L.T."/>
            <person name="Donnenberg M.S."/>
            <person name="Blattner F.R."/>
        </authorList>
    </citation>
    <scope>NUCLEOTIDE SEQUENCE [LARGE SCALE GENOMIC DNA]</scope>
    <source>
        <strain>CFT073 / ATCC 700928 / UPEC</strain>
    </source>
</reference>
<name>RNH2_ECOL6</name>
<protein>
    <recommendedName>
        <fullName evidence="1">Ribonuclease HII</fullName>
        <shortName evidence="1">RNase HII</shortName>
        <ecNumber evidence="1">3.1.26.4</ecNumber>
    </recommendedName>
</protein>
<dbReference type="EC" id="3.1.26.4" evidence="1"/>
<dbReference type="EMBL" id="AE014075">
    <property type="protein sequence ID" value="AAN78712.1"/>
    <property type="molecule type" value="Genomic_DNA"/>
</dbReference>
<dbReference type="RefSeq" id="WP_000569424.1">
    <property type="nucleotide sequence ID" value="NZ_CP051263.1"/>
</dbReference>
<dbReference type="SMR" id="Q8FL06"/>
<dbReference type="STRING" id="199310.c0220"/>
<dbReference type="KEGG" id="ecc:c0220"/>
<dbReference type="eggNOG" id="COG0164">
    <property type="taxonomic scope" value="Bacteria"/>
</dbReference>
<dbReference type="HOGENOM" id="CLU_036532_3_2_6"/>
<dbReference type="BioCyc" id="ECOL199310:C0220-MONOMER"/>
<dbReference type="Proteomes" id="UP000001410">
    <property type="component" value="Chromosome"/>
</dbReference>
<dbReference type="GO" id="GO:0005737">
    <property type="term" value="C:cytoplasm"/>
    <property type="evidence" value="ECO:0007669"/>
    <property type="project" value="UniProtKB-SubCell"/>
</dbReference>
<dbReference type="GO" id="GO:0032299">
    <property type="term" value="C:ribonuclease H2 complex"/>
    <property type="evidence" value="ECO:0007669"/>
    <property type="project" value="TreeGrafter"/>
</dbReference>
<dbReference type="GO" id="GO:0030145">
    <property type="term" value="F:manganese ion binding"/>
    <property type="evidence" value="ECO:0007669"/>
    <property type="project" value="UniProtKB-UniRule"/>
</dbReference>
<dbReference type="GO" id="GO:0003723">
    <property type="term" value="F:RNA binding"/>
    <property type="evidence" value="ECO:0007669"/>
    <property type="project" value="InterPro"/>
</dbReference>
<dbReference type="GO" id="GO:0004523">
    <property type="term" value="F:RNA-DNA hybrid ribonuclease activity"/>
    <property type="evidence" value="ECO:0007669"/>
    <property type="project" value="UniProtKB-UniRule"/>
</dbReference>
<dbReference type="GO" id="GO:0043137">
    <property type="term" value="P:DNA replication, removal of RNA primer"/>
    <property type="evidence" value="ECO:0007669"/>
    <property type="project" value="TreeGrafter"/>
</dbReference>
<dbReference type="GO" id="GO:0006298">
    <property type="term" value="P:mismatch repair"/>
    <property type="evidence" value="ECO:0007669"/>
    <property type="project" value="TreeGrafter"/>
</dbReference>
<dbReference type="CDD" id="cd07182">
    <property type="entry name" value="RNase_HII_bacteria_HII_like"/>
    <property type="match status" value="1"/>
</dbReference>
<dbReference type="FunFam" id="3.30.420.10:FF:000006">
    <property type="entry name" value="Ribonuclease HII"/>
    <property type="match status" value="1"/>
</dbReference>
<dbReference type="Gene3D" id="3.30.420.10">
    <property type="entry name" value="Ribonuclease H-like superfamily/Ribonuclease H"/>
    <property type="match status" value="1"/>
</dbReference>
<dbReference type="HAMAP" id="MF_00052_B">
    <property type="entry name" value="RNase_HII_B"/>
    <property type="match status" value="1"/>
</dbReference>
<dbReference type="InterPro" id="IPR022898">
    <property type="entry name" value="RNase_HII"/>
</dbReference>
<dbReference type="InterPro" id="IPR001352">
    <property type="entry name" value="RNase_HII/HIII"/>
</dbReference>
<dbReference type="InterPro" id="IPR024567">
    <property type="entry name" value="RNase_HII/HIII_dom"/>
</dbReference>
<dbReference type="InterPro" id="IPR012337">
    <property type="entry name" value="RNaseH-like_sf"/>
</dbReference>
<dbReference type="InterPro" id="IPR036397">
    <property type="entry name" value="RNaseH_sf"/>
</dbReference>
<dbReference type="NCBIfam" id="NF000594">
    <property type="entry name" value="PRK00015.1-1"/>
    <property type="match status" value="1"/>
</dbReference>
<dbReference type="NCBIfam" id="NF000595">
    <property type="entry name" value="PRK00015.1-3"/>
    <property type="match status" value="1"/>
</dbReference>
<dbReference type="NCBIfam" id="NF000596">
    <property type="entry name" value="PRK00015.1-4"/>
    <property type="match status" value="1"/>
</dbReference>
<dbReference type="PANTHER" id="PTHR10954">
    <property type="entry name" value="RIBONUCLEASE H2 SUBUNIT A"/>
    <property type="match status" value="1"/>
</dbReference>
<dbReference type="PANTHER" id="PTHR10954:SF18">
    <property type="entry name" value="RIBONUCLEASE HII"/>
    <property type="match status" value="1"/>
</dbReference>
<dbReference type="Pfam" id="PF01351">
    <property type="entry name" value="RNase_HII"/>
    <property type="match status" value="1"/>
</dbReference>
<dbReference type="SUPFAM" id="SSF53098">
    <property type="entry name" value="Ribonuclease H-like"/>
    <property type="match status" value="1"/>
</dbReference>
<dbReference type="PROSITE" id="PS51975">
    <property type="entry name" value="RNASE_H_2"/>
    <property type="match status" value="1"/>
</dbReference>
<comment type="function">
    <text evidence="1">Endonuclease that specifically degrades the RNA of RNA-DNA hybrids.</text>
</comment>
<comment type="catalytic activity">
    <reaction evidence="1">
        <text>Endonucleolytic cleavage to 5'-phosphomonoester.</text>
        <dbReference type="EC" id="3.1.26.4"/>
    </reaction>
</comment>
<comment type="cofactor">
    <cofactor evidence="1">
        <name>Mn(2+)</name>
        <dbReference type="ChEBI" id="CHEBI:29035"/>
    </cofactor>
    <cofactor evidence="1">
        <name>Mg(2+)</name>
        <dbReference type="ChEBI" id="CHEBI:18420"/>
    </cofactor>
    <text evidence="1">Manganese or magnesium. Binds 1 divalent metal ion per monomer in the absence of substrate. May bind a second metal ion after substrate binding.</text>
</comment>
<comment type="subcellular location">
    <subcellularLocation>
        <location evidence="1">Cytoplasm</location>
    </subcellularLocation>
</comment>
<comment type="similarity">
    <text evidence="1">Belongs to the RNase HII family.</text>
</comment>
<feature type="chain" id="PRO_0000111572" description="Ribonuclease HII">
    <location>
        <begin position="1"/>
        <end position="198"/>
    </location>
</feature>
<feature type="domain" description="RNase H type-2" evidence="2">
    <location>
        <begin position="10"/>
        <end position="198"/>
    </location>
</feature>
<feature type="binding site" evidence="1">
    <location>
        <position position="16"/>
    </location>
    <ligand>
        <name>a divalent metal cation</name>
        <dbReference type="ChEBI" id="CHEBI:60240"/>
    </ligand>
</feature>
<feature type="binding site" evidence="1">
    <location>
        <position position="17"/>
    </location>
    <ligand>
        <name>a divalent metal cation</name>
        <dbReference type="ChEBI" id="CHEBI:60240"/>
    </ligand>
</feature>
<feature type="binding site" evidence="1">
    <location>
        <position position="108"/>
    </location>
    <ligand>
        <name>a divalent metal cation</name>
        <dbReference type="ChEBI" id="CHEBI:60240"/>
    </ligand>
</feature>
<proteinExistence type="inferred from homology"/>
<keyword id="KW-0963">Cytoplasm</keyword>
<keyword id="KW-0255">Endonuclease</keyword>
<keyword id="KW-0378">Hydrolase</keyword>
<keyword id="KW-0464">Manganese</keyword>
<keyword id="KW-0479">Metal-binding</keyword>
<keyword id="KW-0540">Nuclease</keyword>
<keyword id="KW-1185">Reference proteome</keyword>
<gene>
    <name evidence="1" type="primary">rnhB</name>
    <name type="ordered locus">c0220</name>
</gene>